<feature type="chain" id="PRO_1000203286" description="Iron-sulfur cluster assembly protein CyaY">
    <location>
        <begin position="1"/>
        <end position="107"/>
    </location>
</feature>
<proteinExistence type="inferred from homology"/>
<accession>C5BBD2</accession>
<reference key="1">
    <citation type="submission" date="2009-03" db="EMBL/GenBank/DDBJ databases">
        <title>Complete genome sequence of Edwardsiella ictaluri 93-146.</title>
        <authorList>
            <person name="Williams M.L."/>
            <person name="Gillaspy A.F."/>
            <person name="Dyer D.W."/>
            <person name="Thune R.L."/>
            <person name="Waldbieser G.C."/>
            <person name="Schuster S.C."/>
            <person name="Gipson J."/>
            <person name="Zaitshik J."/>
            <person name="Landry C."/>
            <person name="Lawrence M.L."/>
        </authorList>
    </citation>
    <scope>NUCLEOTIDE SEQUENCE [LARGE SCALE GENOMIC DNA]</scope>
    <source>
        <strain>93-146</strain>
    </source>
</reference>
<protein>
    <recommendedName>
        <fullName evidence="1">Iron-sulfur cluster assembly protein CyaY</fullName>
    </recommendedName>
</protein>
<comment type="function">
    <text evidence="1">Involved in iron-sulfur (Fe-S) cluster assembly. May act as a regulator of Fe-S biogenesis.</text>
</comment>
<comment type="similarity">
    <text evidence="1">Belongs to the frataxin family.</text>
</comment>
<name>CYAY_EDWI9</name>
<keyword id="KW-0408">Iron</keyword>
<keyword id="KW-0479">Metal-binding</keyword>
<organism>
    <name type="scientific">Edwardsiella ictaluri (strain 93-146)</name>
    <dbReference type="NCBI Taxonomy" id="634503"/>
    <lineage>
        <taxon>Bacteria</taxon>
        <taxon>Pseudomonadati</taxon>
        <taxon>Pseudomonadota</taxon>
        <taxon>Gammaproteobacteria</taxon>
        <taxon>Enterobacterales</taxon>
        <taxon>Hafniaceae</taxon>
        <taxon>Edwardsiella</taxon>
    </lineage>
</organism>
<evidence type="ECO:0000255" key="1">
    <source>
        <dbReference type="HAMAP-Rule" id="MF_00142"/>
    </source>
</evidence>
<dbReference type="EMBL" id="CP001600">
    <property type="protein sequence ID" value="ACR67367.1"/>
    <property type="molecule type" value="Genomic_DNA"/>
</dbReference>
<dbReference type="RefSeq" id="WP_015869586.1">
    <property type="nucleotide sequence ID" value="NZ_CP169062.1"/>
</dbReference>
<dbReference type="SMR" id="C5BBD2"/>
<dbReference type="STRING" id="67780.B6E78_11715"/>
<dbReference type="GeneID" id="69537220"/>
<dbReference type="KEGG" id="eic:NT01EI_0112"/>
<dbReference type="PATRIC" id="fig|634503.3.peg.101"/>
<dbReference type="HOGENOM" id="CLU_080880_3_0_6"/>
<dbReference type="OrthoDB" id="285675at2"/>
<dbReference type="Proteomes" id="UP000001485">
    <property type="component" value="Chromosome"/>
</dbReference>
<dbReference type="GO" id="GO:0005829">
    <property type="term" value="C:cytosol"/>
    <property type="evidence" value="ECO:0007669"/>
    <property type="project" value="TreeGrafter"/>
</dbReference>
<dbReference type="GO" id="GO:0008199">
    <property type="term" value="F:ferric iron binding"/>
    <property type="evidence" value="ECO:0007669"/>
    <property type="project" value="InterPro"/>
</dbReference>
<dbReference type="GO" id="GO:0008198">
    <property type="term" value="F:ferrous iron binding"/>
    <property type="evidence" value="ECO:0007669"/>
    <property type="project" value="TreeGrafter"/>
</dbReference>
<dbReference type="GO" id="GO:0016226">
    <property type="term" value="P:iron-sulfur cluster assembly"/>
    <property type="evidence" value="ECO:0007669"/>
    <property type="project" value="UniProtKB-UniRule"/>
</dbReference>
<dbReference type="CDD" id="cd00503">
    <property type="entry name" value="Frataxin"/>
    <property type="match status" value="1"/>
</dbReference>
<dbReference type="Gene3D" id="3.30.920.10">
    <property type="entry name" value="Frataxin/CyaY"/>
    <property type="match status" value="1"/>
</dbReference>
<dbReference type="HAMAP" id="MF_00142">
    <property type="entry name" value="CyaY"/>
    <property type="match status" value="1"/>
</dbReference>
<dbReference type="InterPro" id="IPR047584">
    <property type="entry name" value="CyaY"/>
</dbReference>
<dbReference type="InterPro" id="IPR002908">
    <property type="entry name" value="Frataxin/CyaY"/>
</dbReference>
<dbReference type="InterPro" id="IPR036524">
    <property type="entry name" value="Frataxin/CyaY_sf"/>
</dbReference>
<dbReference type="InterPro" id="IPR020895">
    <property type="entry name" value="Frataxin_CS"/>
</dbReference>
<dbReference type="NCBIfam" id="TIGR03421">
    <property type="entry name" value="FeS_CyaY"/>
    <property type="match status" value="1"/>
</dbReference>
<dbReference type="PANTHER" id="PTHR16821">
    <property type="entry name" value="FRATAXIN"/>
    <property type="match status" value="1"/>
</dbReference>
<dbReference type="PANTHER" id="PTHR16821:SF2">
    <property type="entry name" value="FRATAXIN, MITOCHONDRIAL"/>
    <property type="match status" value="1"/>
</dbReference>
<dbReference type="Pfam" id="PF01491">
    <property type="entry name" value="Frataxin_Cyay"/>
    <property type="match status" value="1"/>
</dbReference>
<dbReference type="SMART" id="SM01219">
    <property type="entry name" value="Frataxin_Cyay"/>
    <property type="match status" value="1"/>
</dbReference>
<dbReference type="SUPFAM" id="SSF55387">
    <property type="entry name" value="Frataxin/Nqo15-like"/>
    <property type="match status" value="1"/>
</dbReference>
<dbReference type="PROSITE" id="PS01344">
    <property type="entry name" value="FRATAXIN_1"/>
    <property type="match status" value="1"/>
</dbReference>
<dbReference type="PROSITE" id="PS50810">
    <property type="entry name" value="FRATAXIN_2"/>
    <property type="match status" value="1"/>
</dbReference>
<gene>
    <name evidence="1" type="primary">cyaY</name>
    <name type="ordered locus">NT01EI_0112</name>
</gene>
<sequence>MNDSEFHLLADGLMQALEEALDACQSDADIDCETNGGVMTLSFENGSKIVINRQEPLHQIWLATRAGGYHFDYRNGQWRCSRSGVPLPQVLNEACSAQAGIPVTLDL</sequence>